<reference key="1">
    <citation type="journal article" date="1996" name="Mol. Phylogenet. Evol.">
        <title>K-casein gene phylogeny of higher ruminants (Pecora, Artiodactyla).</title>
        <authorList>
            <person name="Cronin M.A."/>
            <person name="Stuart R."/>
            <person name="Pierson B.J."/>
            <person name="Patton J.C."/>
        </authorList>
    </citation>
    <scope>NUCLEOTIDE SEQUENCE [GENOMIC DNA]</scope>
</reference>
<accession>Q95225</accession>
<accession>Q95226</accession>
<comment type="function">
    <text>Kappa-casein stabilizes micelle formation, preventing casein precipitation in milk.</text>
</comment>
<comment type="subcellular location">
    <subcellularLocation>
        <location>Secreted</location>
    </subcellularLocation>
</comment>
<comment type="tissue specificity">
    <text>Mammary gland specific. Secreted in milk.</text>
</comment>
<comment type="similarity">
    <text evidence="5">Belongs to the kappa-casein family.</text>
</comment>
<proteinExistence type="evidence at transcript level"/>
<protein>
    <recommendedName>
        <fullName>Kappa-casein</fullName>
    </recommendedName>
</protein>
<keyword id="KW-0325">Glycoprotein</keyword>
<keyword id="KW-0494">Milk protein</keyword>
<keyword id="KW-0597">Phosphoprotein</keyword>
<keyword id="KW-0964">Secreted</keyword>
<name>CASK_ODOHE</name>
<gene>
    <name type="primary">CSN3</name>
    <name type="synonym">CSN10</name>
    <name type="synonym">CSNK</name>
</gene>
<organism>
    <name type="scientific">Odocoileus hemionus</name>
    <name type="common">Mule deer</name>
    <name type="synonym">Cervus hemionus</name>
    <dbReference type="NCBI Taxonomy" id="9872"/>
    <lineage>
        <taxon>Eukaryota</taxon>
        <taxon>Metazoa</taxon>
        <taxon>Chordata</taxon>
        <taxon>Craniata</taxon>
        <taxon>Vertebrata</taxon>
        <taxon>Euteleostomi</taxon>
        <taxon>Mammalia</taxon>
        <taxon>Eutheria</taxon>
        <taxon>Laurasiatheria</taxon>
        <taxon>Artiodactyla</taxon>
        <taxon>Ruminantia</taxon>
        <taxon>Pecora</taxon>
        <taxon>Cervidae</taxon>
        <taxon>Odocoileinae</taxon>
        <taxon>Odocoileus</taxon>
    </lineage>
</organism>
<dbReference type="EMBL" id="U37360">
    <property type="protein sequence ID" value="AAC48645.1"/>
    <property type="molecule type" value="Genomic_DNA"/>
</dbReference>
<dbReference type="EMBL" id="U37361">
    <property type="protein sequence ID" value="AAC48646.1"/>
    <property type="molecule type" value="Genomic_DNA"/>
</dbReference>
<dbReference type="GlyCosmos" id="Q95225">
    <property type="glycosylation" value="7 sites, No reported glycans"/>
</dbReference>
<dbReference type="GO" id="GO:0005615">
    <property type="term" value="C:extracellular space"/>
    <property type="evidence" value="ECO:0007669"/>
    <property type="project" value="TreeGrafter"/>
</dbReference>
<dbReference type="GO" id="GO:0007595">
    <property type="term" value="P:lactation"/>
    <property type="evidence" value="ECO:0007669"/>
    <property type="project" value="TreeGrafter"/>
</dbReference>
<dbReference type="GO" id="GO:0050821">
    <property type="term" value="P:protein stabilization"/>
    <property type="evidence" value="ECO:0007669"/>
    <property type="project" value="TreeGrafter"/>
</dbReference>
<dbReference type="InterPro" id="IPR000117">
    <property type="entry name" value="Casein_kappa"/>
</dbReference>
<dbReference type="PANTHER" id="PTHR11470">
    <property type="entry name" value="KAPPA CASEIN"/>
    <property type="match status" value="1"/>
</dbReference>
<dbReference type="PANTHER" id="PTHR11470:SF2">
    <property type="entry name" value="KAPPA-CASEIN"/>
    <property type="match status" value="1"/>
</dbReference>
<dbReference type="Pfam" id="PF00997">
    <property type="entry name" value="Casein_kappa"/>
    <property type="match status" value="1"/>
</dbReference>
<evidence type="ECO:0000250" key="1"/>
<evidence type="ECO:0000250" key="2">
    <source>
        <dbReference type="UniProtKB" id="P02668"/>
    </source>
</evidence>
<evidence type="ECO:0000250" key="3">
    <source>
        <dbReference type="UniProtKB" id="P02670"/>
    </source>
</evidence>
<evidence type="ECO:0000256" key="4">
    <source>
        <dbReference type="SAM" id="MobiDB-lite"/>
    </source>
</evidence>
<evidence type="ECO:0000305" key="5"/>
<feature type="chain" id="PRO_0000144115" description="Kappa-casein">
    <location>
        <begin position="1" status="less than"/>
        <end position="122"/>
    </location>
</feature>
<feature type="region of interest" description="Disordered" evidence="4">
    <location>
        <begin position="99"/>
        <end position="122"/>
    </location>
</feature>
<feature type="compositionally biased region" description="Polar residues" evidence="4">
    <location>
        <begin position="110"/>
        <end position="122"/>
    </location>
</feature>
<feature type="site" description="Cleavage; by chymosin/rennin" evidence="1">
    <location>
        <begin position="58"/>
        <end position="59"/>
    </location>
</feature>
<feature type="modified residue" description="Phosphothreonine" evidence="2">
    <location>
        <position position="98"/>
    </location>
</feature>
<feature type="modified residue" description="Phosphoserine; alternate" evidence="2">
    <location>
        <position position="102"/>
    </location>
</feature>
<feature type="modified residue" description="Phosphoserine" evidence="3">
    <location>
        <position position="119"/>
    </location>
</feature>
<feature type="glycosylation site" description="O-linked (GalNAc...) threonine" evidence="2">
    <location>
        <position position="74"/>
    </location>
</feature>
<feature type="glycosylation site" description="O-linked (GalNAc...) threonine" evidence="2">
    <location>
        <position position="84"/>
    </location>
</feature>
<feature type="glycosylation site" description="O-linked (GalNAc...) threonine" evidence="2">
    <location>
        <position position="86"/>
    </location>
</feature>
<feature type="glycosylation site" description="O-linked (GalNAc...) threonine" evidence="2">
    <location>
        <position position="89"/>
    </location>
</feature>
<feature type="glycosylation site" description="O-linked (GalNAc...) threonine" evidence="2">
    <location>
        <position position="95"/>
    </location>
</feature>
<feature type="glycosylation site" description="O-linked (GalNAc...) serine; alternate" evidence="2">
    <location>
        <position position="102"/>
    </location>
</feature>
<feature type="glycosylation site" description="O-linked (GalNAc...) threonine" evidence="2">
    <location>
        <position position="118"/>
    </location>
</feature>
<feature type="sequence variant" description="In subsp. Sitkensis.">
    <original>P</original>
    <variation>L</variation>
    <location>
        <position position="99"/>
    </location>
</feature>
<feature type="non-terminal residue">
    <location>
        <position position="1"/>
    </location>
</feature>
<sequence>VALINNQFLPYPYYAKPGAVRSPAQILQWQVLPNTVPAKSCQAQPTTLARHPHPRLSFMAIPPKKNQDKTDIPTINTIATVESTITPTTEAIVDTVATPEASSEVIESAPETNTDQVTSTVV</sequence>